<feature type="chain" id="PRO_0000094683" description="Holliday junction branch migration complex subunit RuvA">
    <location>
        <begin position="1"/>
        <end position="200"/>
    </location>
</feature>
<feature type="region of interest" description="Domain I" evidence="1">
    <location>
        <begin position="1"/>
        <end position="63"/>
    </location>
</feature>
<feature type="region of interest" description="Domain II" evidence="1">
    <location>
        <begin position="64"/>
        <end position="142"/>
    </location>
</feature>
<feature type="region of interest" description="Flexible linker" evidence="1">
    <location>
        <begin position="143"/>
        <end position="149"/>
    </location>
</feature>
<feature type="region of interest" description="Domain III" evidence="1">
    <location>
        <begin position="150"/>
        <end position="200"/>
    </location>
</feature>
<sequence length="200" mass="22282">MYAYVKGKLTHLYPTHVVVETAGVGYEIQTPNSYRFQKHLDHEVLIRTSLIVREDAQLLYGFSSEEEKDMFLSLIKVTGIGPKSALAILATSTPNEVKRAIENENDTYLTKFPGIGKKTARQIVLDLKGKVKITEEDSDSLLQVDATSTVQDQFVQEAMLALEALGYSKRELAKVEKTLNKNKYDSVDEAVKAGLQLVVS</sequence>
<evidence type="ECO:0000255" key="1">
    <source>
        <dbReference type="HAMAP-Rule" id="MF_00031"/>
    </source>
</evidence>
<reference key="1">
    <citation type="journal article" date="2002" name="Lancet">
        <title>Genome and virulence determinants of high virulence community-acquired MRSA.</title>
        <authorList>
            <person name="Baba T."/>
            <person name="Takeuchi F."/>
            <person name="Kuroda M."/>
            <person name="Yuzawa H."/>
            <person name="Aoki K."/>
            <person name="Oguchi A."/>
            <person name="Nagai Y."/>
            <person name="Iwama N."/>
            <person name="Asano K."/>
            <person name="Naimi T."/>
            <person name="Kuroda H."/>
            <person name="Cui L."/>
            <person name="Yamamoto K."/>
            <person name="Hiramatsu K."/>
        </authorList>
    </citation>
    <scope>NUCLEOTIDE SEQUENCE [LARGE SCALE GENOMIC DNA]</scope>
    <source>
        <strain>MW2</strain>
    </source>
</reference>
<comment type="function">
    <text evidence="1">The RuvA-RuvB-RuvC complex processes Holliday junction (HJ) DNA during genetic recombination and DNA repair, while the RuvA-RuvB complex plays an important role in the rescue of blocked DNA replication forks via replication fork reversal (RFR). RuvA specifically binds to HJ cruciform DNA, conferring on it an open structure. The RuvB hexamer acts as an ATP-dependent pump, pulling dsDNA into and through the RuvAB complex. HJ branch migration allows RuvC to scan DNA until it finds its consensus sequence, where it cleaves and resolves the cruciform DNA.</text>
</comment>
<comment type="subunit">
    <text evidence="1">Homotetramer. Forms an RuvA(8)-RuvB(12)-Holliday junction (HJ) complex. HJ DNA is sandwiched between 2 RuvA tetramers; dsDNA enters through RuvA and exits via RuvB. An RuvB hexamer assembles on each DNA strand where it exits the tetramer. Each RuvB hexamer is contacted by two RuvA subunits (via domain III) on 2 adjacent RuvB subunits; this complex drives branch migration. In the full resolvosome a probable DNA-RuvA(4)-RuvB(12)-RuvC(2) complex forms which resolves the HJ.</text>
</comment>
<comment type="subcellular location">
    <subcellularLocation>
        <location evidence="1">Cytoplasm</location>
    </subcellularLocation>
</comment>
<comment type="domain">
    <text evidence="1">Has three domains with a flexible linker between the domains II and III and assumes an 'L' shape. Domain III is highly mobile and contacts RuvB.</text>
</comment>
<comment type="similarity">
    <text evidence="1">Belongs to the RuvA family.</text>
</comment>
<protein>
    <recommendedName>
        <fullName evidence="1">Holliday junction branch migration complex subunit RuvA</fullName>
    </recommendedName>
</protein>
<keyword id="KW-0963">Cytoplasm</keyword>
<keyword id="KW-0227">DNA damage</keyword>
<keyword id="KW-0233">DNA recombination</keyword>
<keyword id="KW-0234">DNA repair</keyword>
<keyword id="KW-0238">DNA-binding</keyword>
<dbReference type="EMBL" id="BA000033">
    <property type="protein sequence ID" value="BAB95457.1"/>
    <property type="molecule type" value="Genomic_DNA"/>
</dbReference>
<dbReference type="RefSeq" id="WP_000271550.1">
    <property type="nucleotide sequence ID" value="NC_003923.1"/>
</dbReference>
<dbReference type="SMR" id="P66750"/>
<dbReference type="KEGG" id="sam:MW1592"/>
<dbReference type="HOGENOM" id="CLU_087936_1_0_9"/>
<dbReference type="GO" id="GO:0005737">
    <property type="term" value="C:cytoplasm"/>
    <property type="evidence" value="ECO:0007669"/>
    <property type="project" value="UniProtKB-SubCell"/>
</dbReference>
<dbReference type="GO" id="GO:0009379">
    <property type="term" value="C:Holliday junction helicase complex"/>
    <property type="evidence" value="ECO:0007669"/>
    <property type="project" value="InterPro"/>
</dbReference>
<dbReference type="GO" id="GO:0048476">
    <property type="term" value="C:Holliday junction resolvase complex"/>
    <property type="evidence" value="ECO:0007669"/>
    <property type="project" value="UniProtKB-UniRule"/>
</dbReference>
<dbReference type="GO" id="GO:0005524">
    <property type="term" value="F:ATP binding"/>
    <property type="evidence" value="ECO:0007669"/>
    <property type="project" value="InterPro"/>
</dbReference>
<dbReference type="GO" id="GO:0000400">
    <property type="term" value="F:four-way junction DNA binding"/>
    <property type="evidence" value="ECO:0007669"/>
    <property type="project" value="UniProtKB-UniRule"/>
</dbReference>
<dbReference type="GO" id="GO:0009378">
    <property type="term" value="F:four-way junction helicase activity"/>
    <property type="evidence" value="ECO:0007669"/>
    <property type="project" value="InterPro"/>
</dbReference>
<dbReference type="GO" id="GO:0006310">
    <property type="term" value="P:DNA recombination"/>
    <property type="evidence" value="ECO:0007669"/>
    <property type="project" value="UniProtKB-UniRule"/>
</dbReference>
<dbReference type="GO" id="GO:0006281">
    <property type="term" value="P:DNA repair"/>
    <property type="evidence" value="ECO:0007669"/>
    <property type="project" value="UniProtKB-UniRule"/>
</dbReference>
<dbReference type="CDD" id="cd14332">
    <property type="entry name" value="UBA_RuvA_C"/>
    <property type="match status" value="1"/>
</dbReference>
<dbReference type="Gene3D" id="1.10.150.20">
    <property type="entry name" value="5' to 3' exonuclease, C-terminal subdomain"/>
    <property type="match status" value="1"/>
</dbReference>
<dbReference type="Gene3D" id="1.10.8.10">
    <property type="entry name" value="DNA helicase RuvA subunit, C-terminal domain"/>
    <property type="match status" value="1"/>
</dbReference>
<dbReference type="Gene3D" id="2.40.50.140">
    <property type="entry name" value="Nucleic acid-binding proteins"/>
    <property type="match status" value="1"/>
</dbReference>
<dbReference type="HAMAP" id="MF_00031">
    <property type="entry name" value="DNA_HJ_migration_RuvA"/>
    <property type="match status" value="1"/>
</dbReference>
<dbReference type="InterPro" id="IPR013849">
    <property type="entry name" value="DNA_helicase_Holl-junc_RuvA_I"/>
</dbReference>
<dbReference type="InterPro" id="IPR003583">
    <property type="entry name" value="Hlx-hairpin-Hlx_DNA-bd_motif"/>
</dbReference>
<dbReference type="InterPro" id="IPR012340">
    <property type="entry name" value="NA-bd_OB-fold"/>
</dbReference>
<dbReference type="InterPro" id="IPR000085">
    <property type="entry name" value="RuvA"/>
</dbReference>
<dbReference type="InterPro" id="IPR010994">
    <property type="entry name" value="RuvA_2-like"/>
</dbReference>
<dbReference type="InterPro" id="IPR011114">
    <property type="entry name" value="RuvA_C"/>
</dbReference>
<dbReference type="InterPro" id="IPR036267">
    <property type="entry name" value="RuvA_C_sf"/>
</dbReference>
<dbReference type="NCBIfam" id="TIGR00084">
    <property type="entry name" value="ruvA"/>
    <property type="match status" value="1"/>
</dbReference>
<dbReference type="Pfam" id="PF14520">
    <property type="entry name" value="HHH_5"/>
    <property type="match status" value="1"/>
</dbReference>
<dbReference type="Pfam" id="PF07499">
    <property type="entry name" value="RuvA_C"/>
    <property type="match status" value="1"/>
</dbReference>
<dbReference type="Pfam" id="PF01330">
    <property type="entry name" value="RuvA_N"/>
    <property type="match status" value="1"/>
</dbReference>
<dbReference type="SMART" id="SM00278">
    <property type="entry name" value="HhH1"/>
    <property type="match status" value="2"/>
</dbReference>
<dbReference type="SUPFAM" id="SSF46929">
    <property type="entry name" value="DNA helicase RuvA subunit, C-terminal domain"/>
    <property type="match status" value="1"/>
</dbReference>
<dbReference type="SUPFAM" id="SSF50249">
    <property type="entry name" value="Nucleic acid-binding proteins"/>
    <property type="match status" value="1"/>
</dbReference>
<dbReference type="SUPFAM" id="SSF47781">
    <property type="entry name" value="RuvA domain 2-like"/>
    <property type="match status" value="1"/>
</dbReference>
<proteinExistence type="inferred from homology"/>
<organism>
    <name type="scientific">Staphylococcus aureus (strain MW2)</name>
    <dbReference type="NCBI Taxonomy" id="196620"/>
    <lineage>
        <taxon>Bacteria</taxon>
        <taxon>Bacillati</taxon>
        <taxon>Bacillota</taxon>
        <taxon>Bacilli</taxon>
        <taxon>Bacillales</taxon>
        <taxon>Staphylococcaceae</taxon>
        <taxon>Staphylococcus</taxon>
    </lineage>
</organism>
<accession>P66750</accession>
<accession>Q99TL1</accession>
<name>RUVA_STAAW</name>
<gene>
    <name evidence="1" type="primary">ruvA</name>
    <name type="ordered locus">MW1592</name>
</gene>